<sequence length="471" mass="51116">MPSPIHVIGGGLSGAEAAWQIAKAGIPVILHEMRPDRSTPAHHSADLAELVCSNSFRADDAESSAIGILHREMRRLDSLILQAADCNRLPAGGALAVDRQGFAAFVTAAIKASPLITLVRGEVTEIPADWDQIIIATGPLTSETLAAHIKALTGEDDLAFFDAIAPVVYRDSIDMTKAWFQSRYDKVGPGGNGADYINCPLDKEQYQAFVEGLIQGEKISFKEWEGTPYFNGCLPIEIMAERGPETLRHGPMKPVGLTNAHAPTVKPYAIVQLRQDNALGTLYNMVGFQTKLKHAEQIALFRTIPGLEQARFARLGGLHRNIFLNTPKVLDMRLRLKADPRLRFAGQITGCEGYVESAGIGLLVGRMAACERLGESFVPPPTTTALGALLNHITAGHIETIDAGPRSFQPMNVNFGLFPPLTEKIVSPEGKRLRGPEKDQLKKRLLSQRAERDLEAWCTAPTCGPTPLAAE</sequence>
<accession>B2IGU6</accession>
<feature type="chain" id="PRO_0000346324" description="Methylenetetrahydrofolate--tRNA-(uracil-5-)-methyltransferase TrmFO">
    <location>
        <begin position="1"/>
        <end position="471"/>
    </location>
</feature>
<feature type="binding site" evidence="1">
    <location>
        <begin position="9"/>
        <end position="14"/>
    </location>
    <ligand>
        <name>FAD</name>
        <dbReference type="ChEBI" id="CHEBI:57692"/>
    </ligand>
</feature>
<protein>
    <recommendedName>
        <fullName evidence="1">Methylenetetrahydrofolate--tRNA-(uracil-5-)-methyltransferase TrmFO</fullName>
        <ecNumber evidence="1">2.1.1.74</ecNumber>
    </recommendedName>
    <alternativeName>
        <fullName evidence="1">Folate-dependent tRNA (uracil-5-)-methyltransferase</fullName>
    </alternativeName>
    <alternativeName>
        <fullName evidence="1">Folate-dependent tRNA(M-5-U54)-methyltransferase</fullName>
    </alternativeName>
</protein>
<evidence type="ECO:0000255" key="1">
    <source>
        <dbReference type="HAMAP-Rule" id="MF_01037"/>
    </source>
</evidence>
<organism>
    <name type="scientific">Beijerinckia indica subsp. indica (strain ATCC 9039 / DSM 1715 / NCIMB 8712)</name>
    <dbReference type="NCBI Taxonomy" id="395963"/>
    <lineage>
        <taxon>Bacteria</taxon>
        <taxon>Pseudomonadati</taxon>
        <taxon>Pseudomonadota</taxon>
        <taxon>Alphaproteobacteria</taxon>
        <taxon>Hyphomicrobiales</taxon>
        <taxon>Beijerinckiaceae</taxon>
        <taxon>Beijerinckia</taxon>
    </lineage>
</organism>
<comment type="function">
    <text evidence="1">Catalyzes the folate-dependent formation of 5-methyl-uridine at position 54 (M-5-U54) in all tRNAs.</text>
</comment>
<comment type="catalytic activity">
    <reaction evidence="1">
        <text>uridine(54) in tRNA + (6R)-5,10-methylene-5,6,7,8-tetrahydrofolate + NADH + H(+) = 5-methyluridine(54) in tRNA + (6S)-5,6,7,8-tetrahydrofolate + NAD(+)</text>
        <dbReference type="Rhea" id="RHEA:16873"/>
        <dbReference type="Rhea" id="RHEA-COMP:10167"/>
        <dbReference type="Rhea" id="RHEA-COMP:10193"/>
        <dbReference type="ChEBI" id="CHEBI:15378"/>
        <dbReference type="ChEBI" id="CHEBI:15636"/>
        <dbReference type="ChEBI" id="CHEBI:57453"/>
        <dbReference type="ChEBI" id="CHEBI:57540"/>
        <dbReference type="ChEBI" id="CHEBI:57945"/>
        <dbReference type="ChEBI" id="CHEBI:65315"/>
        <dbReference type="ChEBI" id="CHEBI:74447"/>
        <dbReference type="EC" id="2.1.1.74"/>
    </reaction>
</comment>
<comment type="catalytic activity">
    <reaction evidence="1">
        <text>uridine(54) in tRNA + (6R)-5,10-methylene-5,6,7,8-tetrahydrofolate + NADPH + H(+) = 5-methyluridine(54) in tRNA + (6S)-5,6,7,8-tetrahydrofolate + NADP(+)</text>
        <dbReference type="Rhea" id="RHEA:62372"/>
        <dbReference type="Rhea" id="RHEA-COMP:10167"/>
        <dbReference type="Rhea" id="RHEA-COMP:10193"/>
        <dbReference type="ChEBI" id="CHEBI:15378"/>
        <dbReference type="ChEBI" id="CHEBI:15636"/>
        <dbReference type="ChEBI" id="CHEBI:57453"/>
        <dbReference type="ChEBI" id="CHEBI:57783"/>
        <dbReference type="ChEBI" id="CHEBI:58349"/>
        <dbReference type="ChEBI" id="CHEBI:65315"/>
        <dbReference type="ChEBI" id="CHEBI:74447"/>
        <dbReference type="EC" id="2.1.1.74"/>
    </reaction>
</comment>
<comment type="cofactor">
    <cofactor evidence="1">
        <name>FAD</name>
        <dbReference type="ChEBI" id="CHEBI:57692"/>
    </cofactor>
</comment>
<comment type="subcellular location">
    <subcellularLocation>
        <location evidence="1">Cytoplasm</location>
    </subcellularLocation>
</comment>
<comment type="similarity">
    <text evidence="1">Belongs to the MnmG family. TrmFO subfamily.</text>
</comment>
<proteinExistence type="inferred from homology"/>
<gene>
    <name evidence="1" type="primary">trmFO</name>
    <name type="ordered locus">Bind_2243</name>
</gene>
<reference key="1">
    <citation type="journal article" date="2010" name="J. Bacteriol.">
        <title>Complete genome sequence of Beijerinckia indica subsp. indica.</title>
        <authorList>
            <person name="Tamas I."/>
            <person name="Dedysh S.N."/>
            <person name="Liesack W."/>
            <person name="Stott M.B."/>
            <person name="Alam M."/>
            <person name="Murrell J.C."/>
            <person name="Dunfield P.F."/>
        </authorList>
    </citation>
    <scope>NUCLEOTIDE SEQUENCE [LARGE SCALE GENOMIC DNA]</scope>
    <source>
        <strain>ATCC 9039 / DSM 1715 / NCIMB 8712</strain>
    </source>
</reference>
<keyword id="KW-0963">Cytoplasm</keyword>
<keyword id="KW-0274">FAD</keyword>
<keyword id="KW-0285">Flavoprotein</keyword>
<keyword id="KW-0489">Methyltransferase</keyword>
<keyword id="KW-0520">NAD</keyword>
<keyword id="KW-0521">NADP</keyword>
<keyword id="KW-1185">Reference proteome</keyword>
<keyword id="KW-0808">Transferase</keyword>
<keyword id="KW-0819">tRNA processing</keyword>
<name>TRMFO_BEII9</name>
<dbReference type="EC" id="2.1.1.74" evidence="1"/>
<dbReference type="EMBL" id="CP001016">
    <property type="protein sequence ID" value="ACB95860.1"/>
    <property type="molecule type" value="Genomic_DNA"/>
</dbReference>
<dbReference type="RefSeq" id="WP_012385215.1">
    <property type="nucleotide sequence ID" value="NC_010581.1"/>
</dbReference>
<dbReference type="SMR" id="B2IGU6"/>
<dbReference type="STRING" id="395963.Bind_2243"/>
<dbReference type="KEGG" id="bid:Bind_2243"/>
<dbReference type="eggNOG" id="COG1206">
    <property type="taxonomic scope" value="Bacteria"/>
</dbReference>
<dbReference type="HOGENOM" id="CLU_033057_1_0_5"/>
<dbReference type="OrthoDB" id="9803114at2"/>
<dbReference type="Proteomes" id="UP000001695">
    <property type="component" value="Chromosome"/>
</dbReference>
<dbReference type="GO" id="GO:0005829">
    <property type="term" value="C:cytosol"/>
    <property type="evidence" value="ECO:0007669"/>
    <property type="project" value="TreeGrafter"/>
</dbReference>
<dbReference type="GO" id="GO:0050660">
    <property type="term" value="F:flavin adenine dinucleotide binding"/>
    <property type="evidence" value="ECO:0007669"/>
    <property type="project" value="UniProtKB-UniRule"/>
</dbReference>
<dbReference type="GO" id="GO:0047151">
    <property type="term" value="F:tRNA (uracil(54)-C5)-methyltransferase activity, 5,10-methylenetetrahydrofolate-dependent"/>
    <property type="evidence" value="ECO:0007669"/>
    <property type="project" value="UniProtKB-UniRule"/>
</dbReference>
<dbReference type="GO" id="GO:0030488">
    <property type="term" value="P:tRNA methylation"/>
    <property type="evidence" value="ECO:0007669"/>
    <property type="project" value="TreeGrafter"/>
</dbReference>
<dbReference type="GO" id="GO:0002098">
    <property type="term" value="P:tRNA wobble uridine modification"/>
    <property type="evidence" value="ECO:0007669"/>
    <property type="project" value="TreeGrafter"/>
</dbReference>
<dbReference type="Gene3D" id="3.50.50.60">
    <property type="entry name" value="FAD/NAD(P)-binding domain"/>
    <property type="match status" value="2"/>
</dbReference>
<dbReference type="HAMAP" id="MF_01037">
    <property type="entry name" value="TrmFO"/>
    <property type="match status" value="1"/>
</dbReference>
<dbReference type="InterPro" id="IPR036188">
    <property type="entry name" value="FAD/NAD-bd_sf"/>
</dbReference>
<dbReference type="InterPro" id="IPR002218">
    <property type="entry name" value="MnmG-rel"/>
</dbReference>
<dbReference type="InterPro" id="IPR040131">
    <property type="entry name" value="MnmG_N"/>
</dbReference>
<dbReference type="InterPro" id="IPR004417">
    <property type="entry name" value="TrmFO"/>
</dbReference>
<dbReference type="NCBIfam" id="TIGR00137">
    <property type="entry name" value="gid_trmFO"/>
    <property type="match status" value="1"/>
</dbReference>
<dbReference type="NCBIfam" id="NF003739">
    <property type="entry name" value="PRK05335.1"/>
    <property type="match status" value="1"/>
</dbReference>
<dbReference type="PANTHER" id="PTHR11806">
    <property type="entry name" value="GLUCOSE INHIBITED DIVISION PROTEIN A"/>
    <property type="match status" value="1"/>
</dbReference>
<dbReference type="PANTHER" id="PTHR11806:SF2">
    <property type="entry name" value="METHYLENETETRAHYDROFOLATE--TRNA-(URACIL-5-)-METHYLTRANSFERASE TRMFO"/>
    <property type="match status" value="1"/>
</dbReference>
<dbReference type="Pfam" id="PF01134">
    <property type="entry name" value="GIDA"/>
    <property type="match status" value="1"/>
</dbReference>
<dbReference type="SUPFAM" id="SSF51905">
    <property type="entry name" value="FAD/NAD(P)-binding domain"/>
    <property type="match status" value="1"/>
</dbReference>